<sequence length="71" mass="8500">MPVIKVRENEPFDVALRRFKRSCEKAGVLAEVRRREFYEKPTTERKRAKASAVKRHAKKLARENARRTRLY</sequence>
<protein>
    <recommendedName>
        <fullName evidence="1">Small ribosomal subunit protein bS21</fullName>
    </recommendedName>
    <alternativeName>
        <fullName evidence="3">30S ribosomal protein S21</fullName>
    </alternativeName>
</protein>
<reference key="1">
    <citation type="journal article" date="2008" name="J. Bacteriol.">
        <title>The pangenome structure of Escherichia coli: comparative genomic analysis of E. coli commensal and pathogenic isolates.</title>
        <authorList>
            <person name="Rasko D.A."/>
            <person name="Rosovitz M.J."/>
            <person name="Myers G.S.A."/>
            <person name="Mongodin E.F."/>
            <person name="Fricke W.F."/>
            <person name="Gajer P."/>
            <person name="Crabtree J."/>
            <person name="Sebaihia M."/>
            <person name="Thomson N.R."/>
            <person name="Chaudhuri R."/>
            <person name="Henderson I.R."/>
            <person name="Sperandio V."/>
            <person name="Ravel J."/>
        </authorList>
    </citation>
    <scope>NUCLEOTIDE SEQUENCE [LARGE SCALE GENOMIC DNA]</scope>
    <source>
        <strain>E24377A / ETEC</strain>
    </source>
</reference>
<name>RS21_ECO24</name>
<evidence type="ECO:0000255" key="1">
    <source>
        <dbReference type="HAMAP-Rule" id="MF_00358"/>
    </source>
</evidence>
<evidence type="ECO:0000256" key="2">
    <source>
        <dbReference type="SAM" id="MobiDB-lite"/>
    </source>
</evidence>
<evidence type="ECO:0000305" key="3"/>
<comment type="similarity">
    <text evidence="1">Belongs to the bacterial ribosomal protein bS21 family.</text>
</comment>
<proteinExistence type="inferred from homology"/>
<gene>
    <name evidence="1" type="primary">rpsU</name>
    <name type="ordered locus">EcE24377A_3529</name>
</gene>
<accession>A7ZRU7</accession>
<organism>
    <name type="scientific">Escherichia coli O139:H28 (strain E24377A / ETEC)</name>
    <dbReference type="NCBI Taxonomy" id="331111"/>
    <lineage>
        <taxon>Bacteria</taxon>
        <taxon>Pseudomonadati</taxon>
        <taxon>Pseudomonadota</taxon>
        <taxon>Gammaproteobacteria</taxon>
        <taxon>Enterobacterales</taxon>
        <taxon>Enterobacteriaceae</taxon>
        <taxon>Escherichia</taxon>
    </lineage>
</organism>
<keyword id="KW-1185">Reference proteome</keyword>
<keyword id="KW-0687">Ribonucleoprotein</keyword>
<keyword id="KW-0689">Ribosomal protein</keyword>
<feature type="chain" id="PRO_1000059845" description="Small ribosomal subunit protein bS21">
    <location>
        <begin position="1"/>
        <end position="71"/>
    </location>
</feature>
<feature type="region of interest" description="Disordered" evidence="2">
    <location>
        <begin position="43"/>
        <end position="71"/>
    </location>
</feature>
<feature type="compositionally biased region" description="Basic residues" evidence="2">
    <location>
        <begin position="46"/>
        <end position="59"/>
    </location>
</feature>
<feature type="compositionally biased region" description="Basic and acidic residues" evidence="2">
    <location>
        <begin position="60"/>
        <end position="71"/>
    </location>
</feature>
<dbReference type="EMBL" id="CP000800">
    <property type="protein sequence ID" value="ABV17889.1"/>
    <property type="molecule type" value="Genomic_DNA"/>
</dbReference>
<dbReference type="RefSeq" id="WP_001144069.1">
    <property type="nucleotide sequence ID" value="NC_009801.1"/>
</dbReference>
<dbReference type="SMR" id="A7ZRU7"/>
<dbReference type="GeneID" id="98390195"/>
<dbReference type="KEGG" id="ecw:EcE24377A_3529"/>
<dbReference type="HOGENOM" id="CLU_159258_1_0_6"/>
<dbReference type="Proteomes" id="UP000001122">
    <property type="component" value="Chromosome"/>
</dbReference>
<dbReference type="GO" id="GO:1990904">
    <property type="term" value="C:ribonucleoprotein complex"/>
    <property type="evidence" value="ECO:0007669"/>
    <property type="project" value="UniProtKB-KW"/>
</dbReference>
<dbReference type="GO" id="GO:0005840">
    <property type="term" value="C:ribosome"/>
    <property type="evidence" value="ECO:0007669"/>
    <property type="project" value="UniProtKB-KW"/>
</dbReference>
<dbReference type="GO" id="GO:0003735">
    <property type="term" value="F:structural constituent of ribosome"/>
    <property type="evidence" value="ECO:0007669"/>
    <property type="project" value="InterPro"/>
</dbReference>
<dbReference type="GO" id="GO:0006412">
    <property type="term" value="P:translation"/>
    <property type="evidence" value="ECO:0007669"/>
    <property type="project" value="UniProtKB-UniRule"/>
</dbReference>
<dbReference type="FunFam" id="1.20.5.1150:FF:000001">
    <property type="entry name" value="30S ribosomal protein S21"/>
    <property type="match status" value="1"/>
</dbReference>
<dbReference type="Gene3D" id="1.20.5.1150">
    <property type="entry name" value="Ribosomal protein S8"/>
    <property type="match status" value="1"/>
</dbReference>
<dbReference type="HAMAP" id="MF_00358">
    <property type="entry name" value="Ribosomal_bS21"/>
    <property type="match status" value="1"/>
</dbReference>
<dbReference type="InterPro" id="IPR001911">
    <property type="entry name" value="Ribosomal_bS21"/>
</dbReference>
<dbReference type="InterPro" id="IPR018278">
    <property type="entry name" value="Ribosomal_bS21_CS"/>
</dbReference>
<dbReference type="InterPro" id="IPR038380">
    <property type="entry name" value="Ribosomal_bS21_sf"/>
</dbReference>
<dbReference type="NCBIfam" id="TIGR00030">
    <property type="entry name" value="S21p"/>
    <property type="match status" value="1"/>
</dbReference>
<dbReference type="PANTHER" id="PTHR21109">
    <property type="entry name" value="MITOCHONDRIAL 28S RIBOSOMAL PROTEIN S21"/>
    <property type="match status" value="1"/>
</dbReference>
<dbReference type="PANTHER" id="PTHR21109:SF22">
    <property type="entry name" value="SMALL RIBOSOMAL SUBUNIT PROTEIN BS21"/>
    <property type="match status" value="1"/>
</dbReference>
<dbReference type="Pfam" id="PF01165">
    <property type="entry name" value="Ribosomal_S21"/>
    <property type="match status" value="1"/>
</dbReference>
<dbReference type="PRINTS" id="PR00976">
    <property type="entry name" value="RIBOSOMALS21"/>
</dbReference>
<dbReference type="PROSITE" id="PS01181">
    <property type="entry name" value="RIBOSOMAL_S21"/>
    <property type="match status" value="1"/>
</dbReference>